<sequence>MSIRAEEISALIKQQIENYQSEIEVSDVGTVIQVGDGIARAHGLDNVMAGELVEFSNGVMGLAQNLEENNVGIIILGPYTEIREGDEVRRTGRIMQVPVGKELIGRVVNPLGQPVDGLGPINTTNTRPIESPAPGVMDRKSVHEPLQTGIKAIDALVPIGRGQRELIIGDRQTGKTAVALDTIINQKDEDMICIYVAIGQKESTVRNVVETLRKHGALEYTIVVTASASQPAPLLYLAPYAGVTMGEEFMYNGKHVLVVYDDLSKQAAAYRELSLLLRRPPGREAYPGDVFYLHSRLLERAAKLSDAKGGGSLTALPFIETQAGDVSAYIPTNVISITDGQIFLQSDLFFSGVRPAIDAGTSVSRVGGSAQIKAMSKVSGTLRLDLASYRELEAFAQFGSDLDKATQAKLNRGARTVEVLKQGLHKPLRVEKQVIILYALTRGFLDDIPVVDITRFEEEFHAWLDSNATDLLEEIRTTKKLADDDKFAAAINGFKKVFVASE</sequence>
<organism>
    <name type="scientific">Bacillus anthracis (strain A0248)</name>
    <dbReference type="NCBI Taxonomy" id="592021"/>
    <lineage>
        <taxon>Bacteria</taxon>
        <taxon>Bacillati</taxon>
        <taxon>Bacillota</taxon>
        <taxon>Bacilli</taxon>
        <taxon>Bacillales</taxon>
        <taxon>Bacillaceae</taxon>
        <taxon>Bacillus</taxon>
        <taxon>Bacillus cereus group</taxon>
    </lineage>
</organism>
<dbReference type="EC" id="7.1.2.2" evidence="1"/>
<dbReference type="EMBL" id="CP001598">
    <property type="protein sequence ID" value="ACQ49441.1"/>
    <property type="molecule type" value="Genomic_DNA"/>
</dbReference>
<dbReference type="RefSeq" id="WP_000027518.1">
    <property type="nucleotide sequence ID" value="NC_012659.1"/>
</dbReference>
<dbReference type="SMR" id="C3P1F6"/>
<dbReference type="GeneID" id="93005816"/>
<dbReference type="KEGG" id="bai:BAA_5577"/>
<dbReference type="HOGENOM" id="CLU_010091_2_1_9"/>
<dbReference type="GO" id="GO:0005886">
    <property type="term" value="C:plasma membrane"/>
    <property type="evidence" value="ECO:0007669"/>
    <property type="project" value="UniProtKB-SubCell"/>
</dbReference>
<dbReference type="GO" id="GO:0045259">
    <property type="term" value="C:proton-transporting ATP synthase complex"/>
    <property type="evidence" value="ECO:0007669"/>
    <property type="project" value="UniProtKB-KW"/>
</dbReference>
<dbReference type="GO" id="GO:0043531">
    <property type="term" value="F:ADP binding"/>
    <property type="evidence" value="ECO:0007669"/>
    <property type="project" value="TreeGrafter"/>
</dbReference>
<dbReference type="GO" id="GO:0005524">
    <property type="term" value="F:ATP binding"/>
    <property type="evidence" value="ECO:0007669"/>
    <property type="project" value="UniProtKB-UniRule"/>
</dbReference>
<dbReference type="GO" id="GO:0046933">
    <property type="term" value="F:proton-transporting ATP synthase activity, rotational mechanism"/>
    <property type="evidence" value="ECO:0007669"/>
    <property type="project" value="UniProtKB-UniRule"/>
</dbReference>
<dbReference type="CDD" id="cd18113">
    <property type="entry name" value="ATP-synt_F1_alpha_C"/>
    <property type="match status" value="1"/>
</dbReference>
<dbReference type="CDD" id="cd18116">
    <property type="entry name" value="ATP-synt_F1_alpha_N"/>
    <property type="match status" value="1"/>
</dbReference>
<dbReference type="CDD" id="cd01132">
    <property type="entry name" value="F1-ATPase_alpha_CD"/>
    <property type="match status" value="1"/>
</dbReference>
<dbReference type="FunFam" id="1.20.150.20:FF:000001">
    <property type="entry name" value="ATP synthase subunit alpha"/>
    <property type="match status" value="1"/>
</dbReference>
<dbReference type="FunFam" id="2.40.30.20:FF:000001">
    <property type="entry name" value="ATP synthase subunit alpha"/>
    <property type="match status" value="1"/>
</dbReference>
<dbReference type="FunFam" id="3.40.50.300:FF:000002">
    <property type="entry name" value="ATP synthase subunit alpha"/>
    <property type="match status" value="1"/>
</dbReference>
<dbReference type="Gene3D" id="2.40.30.20">
    <property type="match status" value="1"/>
</dbReference>
<dbReference type="Gene3D" id="1.20.150.20">
    <property type="entry name" value="ATP synthase alpha/beta chain, C-terminal domain"/>
    <property type="match status" value="1"/>
</dbReference>
<dbReference type="Gene3D" id="3.40.50.300">
    <property type="entry name" value="P-loop containing nucleotide triphosphate hydrolases"/>
    <property type="match status" value="1"/>
</dbReference>
<dbReference type="HAMAP" id="MF_01346">
    <property type="entry name" value="ATP_synth_alpha_bact"/>
    <property type="match status" value="1"/>
</dbReference>
<dbReference type="InterPro" id="IPR023366">
    <property type="entry name" value="ATP_synth_asu-like_sf"/>
</dbReference>
<dbReference type="InterPro" id="IPR000793">
    <property type="entry name" value="ATP_synth_asu_C"/>
</dbReference>
<dbReference type="InterPro" id="IPR038376">
    <property type="entry name" value="ATP_synth_asu_C_sf"/>
</dbReference>
<dbReference type="InterPro" id="IPR033732">
    <property type="entry name" value="ATP_synth_F1_a_nt-bd_dom"/>
</dbReference>
<dbReference type="InterPro" id="IPR005294">
    <property type="entry name" value="ATP_synth_F1_asu"/>
</dbReference>
<dbReference type="InterPro" id="IPR020003">
    <property type="entry name" value="ATPase_a/bsu_AS"/>
</dbReference>
<dbReference type="InterPro" id="IPR004100">
    <property type="entry name" value="ATPase_F1/V1/A1_a/bsu_N"/>
</dbReference>
<dbReference type="InterPro" id="IPR036121">
    <property type="entry name" value="ATPase_F1/V1/A1_a/bsu_N_sf"/>
</dbReference>
<dbReference type="InterPro" id="IPR000194">
    <property type="entry name" value="ATPase_F1/V1/A1_a/bsu_nucl-bd"/>
</dbReference>
<dbReference type="InterPro" id="IPR027417">
    <property type="entry name" value="P-loop_NTPase"/>
</dbReference>
<dbReference type="NCBIfam" id="TIGR00962">
    <property type="entry name" value="atpA"/>
    <property type="match status" value="1"/>
</dbReference>
<dbReference type="NCBIfam" id="NF009884">
    <property type="entry name" value="PRK13343.1"/>
    <property type="match status" value="1"/>
</dbReference>
<dbReference type="PANTHER" id="PTHR48082">
    <property type="entry name" value="ATP SYNTHASE SUBUNIT ALPHA, MITOCHONDRIAL"/>
    <property type="match status" value="1"/>
</dbReference>
<dbReference type="PANTHER" id="PTHR48082:SF2">
    <property type="entry name" value="ATP SYNTHASE SUBUNIT ALPHA, MITOCHONDRIAL"/>
    <property type="match status" value="1"/>
</dbReference>
<dbReference type="Pfam" id="PF00006">
    <property type="entry name" value="ATP-synt_ab"/>
    <property type="match status" value="1"/>
</dbReference>
<dbReference type="Pfam" id="PF00306">
    <property type="entry name" value="ATP-synt_ab_C"/>
    <property type="match status" value="1"/>
</dbReference>
<dbReference type="Pfam" id="PF02874">
    <property type="entry name" value="ATP-synt_ab_N"/>
    <property type="match status" value="1"/>
</dbReference>
<dbReference type="PIRSF" id="PIRSF039088">
    <property type="entry name" value="F_ATPase_subunit_alpha"/>
    <property type="match status" value="1"/>
</dbReference>
<dbReference type="SUPFAM" id="SSF47917">
    <property type="entry name" value="C-terminal domain of alpha and beta subunits of F1 ATP synthase"/>
    <property type="match status" value="1"/>
</dbReference>
<dbReference type="SUPFAM" id="SSF50615">
    <property type="entry name" value="N-terminal domain of alpha and beta subunits of F1 ATP synthase"/>
    <property type="match status" value="1"/>
</dbReference>
<dbReference type="SUPFAM" id="SSF52540">
    <property type="entry name" value="P-loop containing nucleoside triphosphate hydrolases"/>
    <property type="match status" value="1"/>
</dbReference>
<dbReference type="PROSITE" id="PS00152">
    <property type="entry name" value="ATPASE_ALPHA_BETA"/>
    <property type="match status" value="1"/>
</dbReference>
<gene>
    <name evidence="1" type="primary">atpA</name>
    <name type="ordered locus">BAA_5577</name>
</gene>
<reference key="1">
    <citation type="submission" date="2009-04" db="EMBL/GenBank/DDBJ databases">
        <title>Genome sequence of Bacillus anthracis A0248.</title>
        <authorList>
            <person name="Dodson R.J."/>
            <person name="Munk A.C."/>
            <person name="Bruce D."/>
            <person name="Detter C."/>
            <person name="Tapia R."/>
            <person name="Sutton G."/>
            <person name="Sims D."/>
            <person name="Brettin T."/>
        </authorList>
    </citation>
    <scope>NUCLEOTIDE SEQUENCE [LARGE SCALE GENOMIC DNA]</scope>
    <source>
        <strain>A0248</strain>
    </source>
</reference>
<accession>C3P1F6</accession>
<protein>
    <recommendedName>
        <fullName evidence="1">ATP synthase subunit alpha</fullName>
        <ecNumber evidence="1">7.1.2.2</ecNumber>
    </recommendedName>
    <alternativeName>
        <fullName evidence="1">ATP synthase F1 sector subunit alpha</fullName>
    </alternativeName>
    <alternativeName>
        <fullName evidence="1">F-ATPase subunit alpha</fullName>
    </alternativeName>
</protein>
<feature type="chain" id="PRO_1000166516" description="ATP synthase subunit alpha">
    <location>
        <begin position="1"/>
        <end position="502"/>
    </location>
</feature>
<feature type="region of interest" description="Disordered" evidence="2">
    <location>
        <begin position="115"/>
        <end position="135"/>
    </location>
</feature>
<feature type="binding site" evidence="1">
    <location>
        <begin position="169"/>
        <end position="176"/>
    </location>
    <ligand>
        <name>ATP</name>
        <dbReference type="ChEBI" id="CHEBI:30616"/>
    </ligand>
</feature>
<feature type="site" description="Required for activity" evidence="1">
    <location>
        <position position="362"/>
    </location>
</feature>
<name>ATPA_BACAA</name>
<keyword id="KW-0066">ATP synthesis</keyword>
<keyword id="KW-0067">ATP-binding</keyword>
<keyword id="KW-1003">Cell membrane</keyword>
<keyword id="KW-0139">CF(1)</keyword>
<keyword id="KW-0375">Hydrogen ion transport</keyword>
<keyword id="KW-0406">Ion transport</keyword>
<keyword id="KW-0472">Membrane</keyword>
<keyword id="KW-0547">Nucleotide-binding</keyword>
<keyword id="KW-1278">Translocase</keyword>
<keyword id="KW-0813">Transport</keyword>
<evidence type="ECO:0000255" key="1">
    <source>
        <dbReference type="HAMAP-Rule" id="MF_01346"/>
    </source>
</evidence>
<evidence type="ECO:0000256" key="2">
    <source>
        <dbReference type="SAM" id="MobiDB-lite"/>
    </source>
</evidence>
<proteinExistence type="inferred from homology"/>
<comment type="function">
    <text evidence="1">Produces ATP from ADP in the presence of a proton gradient across the membrane. The alpha chain is a regulatory subunit.</text>
</comment>
<comment type="catalytic activity">
    <reaction evidence="1">
        <text>ATP + H2O + 4 H(+)(in) = ADP + phosphate + 5 H(+)(out)</text>
        <dbReference type="Rhea" id="RHEA:57720"/>
        <dbReference type="ChEBI" id="CHEBI:15377"/>
        <dbReference type="ChEBI" id="CHEBI:15378"/>
        <dbReference type="ChEBI" id="CHEBI:30616"/>
        <dbReference type="ChEBI" id="CHEBI:43474"/>
        <dbReference type="ChEBI" id="CHEBI:456216"/>
        <dbReference type="EC" id="7.1.2.2"/>
    </reaction>
</comment>
<comment type="subunit">
    <text evidence="1">F-type ATPases have 2 components, CF(1) - the catalytic core - and CF(0) - the membrane proton channel. CF(1) has five subunits: alpha(3), beta(3), gamma(1), delta(1), epsilon(1). CF(0) has three main subunits: a(1), b(2) and c(9-12). The alpha and beta chains form an alternating ring which encloses part of the gamma chain. CF(1) is attached to CF(0) by a central stalk formed by the gamma and epsilon chains, while a peripheral stalk is formed by the delta and b chains.</text>
</comment>
<comment type="subcellular location">
    <subcellularLocation>
        <location evidence="1">Cell membrane</location>
        <topology evidence="1">Peripheral membrane protein</topology>
    </subcellularLocation>
</comment>
<comment type="similarity">
    <text evidence="1">Belongs to the ATPase alpha/beta chains family.</text>
</comment>